<protein>
    <recommendedName>
        <fullName>Cytosolic phospholipase A2</fullName>
        <shortName>cPLA2</shortName>
    </recommendedName>
    <alternativeName>
        <fullName>Phospholipase A2 group IVA</fullName>
    </alternativeName>
    <domain>
        <recommendedName>
            <fullName>Phospholipase A2</fullName>
            <ecNumber evidence="10">3.1.1.4</ecNumber>
        </recommendedName>
        <alternativeName>
            <fullName>Phosphatidylcholine 2-acylhydrolase</fullName>
        </alternativeName>
    </domain>
    <domain>
        <recommendedName>
            <fullName>Lysophospholipase</fullName>
            <ecNumber evidence="2">3.1.1.5</ecNumber>
        </recommendedName>
    </domain>
</protein>
<comment type="function">
    <text evidence="2 10 11 12">Has primarily calcium-dependent phospholipase and lysophospholipase activities, with a major role in membrane lipid remodeling and biosynthesis of lipid mediators of the inflammatory response (PubMed:1904318, PubMed:9403692, PubMed:9403693). Plays an important role in embryo implantation and parturition through its ability to trigger prostanoid production (PubMed:9403692, PubMed:9403693). Preferentially hydrolyzes the ester bond of the fatty acyl group attached at sn-2 position of phospholipids (phospholipase A2 activity). Selectively hydrolyzes sn-2 arachidonoyl group from membrane phospholipids, providing the precursor for eicosanoid biosynthesis via the cyclooxygenase pathway. In an alternative pathway of eicosanoid biosynthesis, hydrolyzes sn-2 fatty acyl chain of eicosanoid lysophopholipids to release free bioactive eicosanoids. Hydrolyzes the ester bond of the fatty acyl group attached at sn-1 position of phospholipids (phospholipase A1 activity) only if an ether linkage rather than an ester linkage is present at the sn-2 position. This hydrolysis is not stereospecific. Has calcium-independent phospholipase A2 and lysophospholipase activities in the presence of phosphoinositides. Has O-acyltransferase activity. Catalyzes the transfer of fatty acyl chains from phospholipids to a primary hydroxyl group of glycerol (sn-1 or sn-3), potentially contributing to monoacylglycerol synthesis (By similarity).</text>
</comment>
<comment type="catalytic activity">
    <reaction evidence="10">
        <text>a 1,2-diacyl-sn-glycero-3-phosphocholine + H2O = a 1-acyl-sn-glycero-3-phosphocholine + a fatty acid + H(+)</text>
        <dbReference type="Rhea" id="RHEA:15801"/>
        <dbReference type="ChEBI" id="CHEBI:15377"/>
        <dbReference type="ChEBI" id="CHEBI:15378"/>
        <dbReference type="ChEBI" id="CHEBI:28868"/>
        <dbReference type="ChEBI" id="CHEBI:57643"/>
        <dbReference type="ChEBI" id="CHEBI:58168"/>
        <dbReference type="EC" id="3.1.1.4"/>
    </reaction>
    <physiologicalReaction direction="left-to-right" evidence="14">
        <dbReference type="Rhea" id="RHEA:15802"/>
    </physiologicalReaction>
</comment>
<comment type="catalytic activity">
    <reaction evidence="2">
        <text>a 1-O-alkyl-2-acyl-sn-glycero-3-phosphocholine + H2O = a 1-O-alkyl-sn-glycero-3-phosphocholine + a fatty acid + H(+)</text>
        <dbReference type="Rhea" id="RHEA:36231"/>
        <dbReference type="ChEBI" id="CHEBI:15377"/>
        <dbReference type="ChEBI" id="CHEBI:15378"/>
        <dbReference type="ChEBI" id="CHEBI:28868"/>
        <dbReference type="ChEBI" id="CHEBI:30909"/>
        <dbReference type="ChEBI" id="CHEBI:36702"/>
        <dbReference type="EC" id="3.1.1.4"/>
    </reaction>
    <physiologicalReaction direction="left-to-right" evidence="2">
        <dbReference type="Rhea" id="RHEA:36232"/>
    </physiologicalReaction>
</comment>
<comment type="catalytic activity">
    <reaction evidence="2">
        <text>a 1-acyl-sn-glycero-3-phosphocholine + H2O = sn-glycerol 3-phosphocholine + a fatty acid + H(+)</text>
        <dbReference type="Rhea" id="RHEA:15177"/>
        <dbReference type="ChEBI" id="CHEBI:15377"/>
        <dbReference type="ChEBI" id="CHEBI:15378"/>
        <dbReference type="ChEBI" id="CHEBI:16870"/>
        <dbReference type="ChEBI" id="CHEBI:28868"/>
        <dbReference type="ChEBI" id="CHEBI:58168"/>
        <dbReference type="EC" id="3.1.1.5"/>
    </reaction>
    <physiologicalReaction direction="left-to-right" evidence="2">
        <dbReference type="Rhea" id="RHEA:15178"/>
    </physiologicalReaction>
</comment>
<comment type="catalytic activity">
    <reaction evidence="2">
        <text>1-hexadecanoyl-2-(5Z,8Z,11Z,14Z-eicosatetraenoyl)-sn-glycero-3-phosphocholine + H2O = 1-hexadecanoyl-sn-glycero-3-phosphocholine + (5Z,8Z,11Z,14Z)-eicosatetraenoate + H(+)</text>
        <dbReference type="Rhea" id="RHEA:40427"/>
        <dbReference type="ChEBI" id="CHEBI:15377"/>
        <dbReference type="ChEBI" id="CHEBI:15378"/>
        <dbReference type="ChEBI" id="CHEBI:32395"/>
        <dbReference type="ChEBI" id="CHEBI:72998"/>
        <dbReference type="ChEBI" id="CHEBI:73003"/>
    </reaction>
    <physiologicalReaction direction="left-to-right" evidence="2">
        <dbReference type="Rhea" id="RHEA:40428"/>
    </physiologicalReaction>
</comment>
<comment type="catalytic activity">
    <reaction evidence="2">
        <text>1,2-di-(5Z,8Z,11Z,14Z-eicosatetraenoyl)-sn-glycero-3-phosphocholine + H2O = 1-(5Z,8Z,11Z,14Z-eicosatetraenoyl)-sn-glycero-3-phosphocholine + (5Z,8Z,11Z,14Z)-eicosatetraenoate + H(+)</text>
        <dbReference type="Rhea" id="RHEA:41075"/>
        <dbReference type="ChEBI" id="CHEBI:15377"/>
        <dbReference type="ChEBI" id="CHEBI:15378"/>
        <dbReference type="ChEBI" id="CHEBI:32395"/>
        <dbReference type="ChEBI" id="CHEBI:60657"/>
        <dbReference type="ChEBI" id="CHEBI:74344"/>
    </reaction>
    <physiologicalReaction direction="left-to-right" evidence="2">
        <dbReference type="Rhea" id="RHEA:41076"/>
    </physiologicalReaction>
</comment>
<comment type="catalytic activity">
    <reaction evidence="12">
        <text>1-octadecanoyl-2-(5Z,8Z,11Z,14Z-eicosatetraenoyl)-sn-glycero-3-phosphocholine + H2O = 1-octadecanoyl-sn-glycero-3-phosphocholine + (5Z,8Z,11Z,14Z)-eicosatetraenoate + H(+)</text>
        <dbReference type="Rhea" id="RHEA:40519"/>
        <dbReference type="ChEBI" id="CHEBI:15377"/>
        <dbReference type="ChEBI" id="CHEBI:15378"/>
        <dbReference type="ChEBI" id="CHEBI:32395"/>
        <dbReference type="ChEBI" id="CHEBI:73858"/>
        <dbReference type="ChEBI" id="CHEBI:74965"/>
    </reaction>
    <physiologicalReaction direction="left-to-right" evidence="15">
        <dbReference type="Rhea" id="RHEA:40520"/>
    </physiologicalReaction>
</comment>
<comment type="catalytic activity">
    <reaction evidence="2">
        <text>1-hexadecanoyl-2-(9Z,12Z-octadecadienoyl)-sn-glycero-3-phosphocholine + H2O = (9Z,12Z)-octadecadienoate + 1-hexadecanoyl-sn-glycero-3-phosphocholine + H(+)</text>
        <dbReference type="Rhea" id="RHEA:40811"/>
        <dbReference type="ChEBI" id="CHEBI:15377"/>
        <dbReference type="ChEBI" id="CHEBI:15378"/>
        <dbReference type="ChEBI" id="CHEBI:30245"/>
        <dbReference type="ChEBI" id="CHEBI:72998"/>
        <dbReference type="ChEBI" id="CHEBI:73002"/>
    </reaction>
    <physiologicalReaction direction="left-to-right" evidence="2">
        <dbReference type="Rhea" id="RHEA:40812"/>
    </physiologicalReaction>
</comment>
<comment type="catalytic activity">
    <reaction evidence="2">
        <text>1-octadecanoyl-2-(9Z,12Z,15Z-octadecatrienoyl)-sn-glycero-3-phosphocholine + H2O = (9Z,12Z,15Z)-octadecatrienoate + 1-octadecanoyl-sn-glycero-3-phosphocholine + H(+)</text>
        <dbReference type="Rhea" id="RHEA:41307"/>
        <dbReference type="ChEBI" id="CHEBI:15377"/>
        <dbReference type="ChEBI" id="CHEBI:15378"/>
        <dbReference type="ChEBI" id="CHEBI:32387"/>
        <dbReference type="ChEBI" id="CHEBI:73858"/>
        <dbReference type="ChEBI" id="CHEBI:78022"/>
    </reaction>
    <physiologicalReaction direction="left-to-right" evidence="2">
        <dbReference type="Rhea" id="RHEA:41308"/>
    </physiologicalReaction>
</comment>
<comment type="catalytic activity">
    <reaction evidence="2">
        <text>1-(5Z,8Z,11Z,14Z-eicosatetraenoyl)-2-hexadecanoyl-sn-glycero-3-phosphocholine + H2O = 1-(5Z,8Z,11Z,14Z-eicosatetraenoyl)-sn-glycero-3-phosphocholine + hexadecanoate + H(+)</text>
        <dbReference type="Rhea" id="RHEA:41071"/>
        <dbReference type="ChEBI" id="CHEBI:7896"/>
        <dbReference type="ChEBI" id="CHEBI:15377"/>
        <dbReference type="ChEBI" id="CHEBI:15378"/>
        <dbReference type="ChEBI" id="CHEBI:74344"/>
        <dbReference type="ChEBI" id="CHEBI:77694"/>
    </reaction>
    <physiologicalReaction direction="left-to-right" evidence="2">
        <dbReference type="Rhea" id="RHEA:41072"/>
    </physiologicalReaction>
</comment>
<comment type="catalytic activity">
    <reaction evidence="2">
        <text>1-O-hexadecyl-2-(5Z,8Z,11Z,14Z)-eicosatetraenoyl-sn-glycero-3-phosphocholine + H2O = 1-O-hexadecyl-sn-glycero-3-phosphocholine + (5Z,8Z,11Z,14Z)-eicosatetraenoate + H(+)</text>
        <dbReference type="Rhea" id="RHEA:41067"/>
        <dbReference type="ChEBI" id="CHEBI:15377"/>
        <dbReference type="ChEBI" id="CHEBI:15378"/>
        <dbReference type="ChEBI" id="CHEBI:32395"/>
        <dbReference type="ChEBI" id="CHEBI:55430"/>
        <dbReference type="ChEBI" id="CHEBI:64496"/>
    </reaction>
    <physiologicalReaction direction="left-to-right" evidence="2">
        <dbReference type="Rhea" id="RHEA:41068"/>
    </physiologicalReaction>
</comment>
<comment type="catalytic activity">
    <reaction evidence="2">
        <text>1,2-di-(9Z-octadecenoyl)-sn-glycero-3-phospho-(1'-sn-glycerol) + H2O = 1-(9Z-octadecenoyl)-sn-glycero-3-phospho-(1'-sn-glycerol) + (9Z)-octadecenoate + H(+)</text>
        <dbReference type="Rhea" id="RHEA:41123"/>
        <dbReference type="ChEBI" id="CHEBI:15377"/>
        <dbReference type="ChEBI" id="CHEBI:15378"/>
        <dbReference type="ChEBI" id="CHEBI:30823"/>
        <dbReference type="ChEBI" id="CHEBI:72828"/>
        <dbReference type="ChEBI" id="CHEBI:75163"/>
    </reaction>
    <physiologicalReaction direction="left-to-right" evidence="2">
        <dbReference type="Rhea" id="RHEA:41124"/>
    </physiologicalReaction>
</comment>
<comment type="catalytic activity">
    <reaction evidence="2">
        <text>1-octadecanoyl-2-(5Z,8Z,11Z,14Z-eicosatetraenoyl)-sn-glycero-3-phosphate + H2O = 1-octadecanoyl-sn-glycero-3-phosphate + (5Z,8Z,11Z,14Z)-eicosatetraenoate + H(+)</text>
        <dbReference type="Rhea" id="RHEA:40451"/>
        <dbReference type="ChEBI" id="CHEBI:15377"/>
        <dbReference type="ChEBI" id="CHEBI:15378"/>
        <dbReference type="ChEBI" id="CHEBI:32395"/>
        <dbReference type="ChEBI" id="CHEBI:74565"/>
        <dbReference type="ChEBI" id="CHEBI:77091"/>
    </reaction>
    <physiologicalReaction direction="left-to-right" evidence="2">
        <dbReference type="Rhea" id="RHEA:40452"/>
    </physiologicalReaction>
</comment>
<comment type="catalytic activity">
    <reaction evidence="2">
        <text>1-hexadecanoyl-sn-glycero-3-phosphocholine + H2O = sn-glycerol 3-phosphocholine + hexadecanoate + H(+)</text>
        <dbReference type="Rhea" id="RHEA:40435"/>
        <dbReference type="ChEBI" id="CHEBI:7896"/>
        <dbReference type="ChEBI" id="CHEBI:15377"/>
        <dbReference type="ChEBI" id="CHEBI:15378"/>
        <dbReference type="ChEBI" id="CHEBI:16870"/>
        <dbReference type="ChEBI" id="CHEBI:72998"/>
    </reaction>
    <physiologicalReaction direction="left-to-right" evidence="2">
        <dbReference type="Rhea" id="RHEA:40436"/>
    </physiologicalReaction>
</comment>
<comment type="catalytic activity">
    <reaction evidence="2">
        <text>2-(prostaglandin E2)-sn-glycero-3-phosphoethanolamine + H2O = sn-glycero-3-phosphoethanolamine + prostaglandin E2 + H(+)</text>
        <dbReference type="Rhea" id="RHEA:53704"/>
        <dbReference type="ChEBI" id="CHEBI:15377"/>
        <dbReference type="ChEBI" id="CHEBI:15378"/>
        <dbReference type="ChEBI" id="CHEBI:137581"/>
        <dbReference type="ChEBI" id="CHEBI:143890"/>
        <dbReference type="ChEBI" id="CHEBI:606564"/>
    </reaction>
    <physiologicalReaction direction="left-to-right" evidence="2">
        <dbReference type="Rhea" id="RHEA:53705"/>
    </physiologicalReaction>
</comment>
<comment type="catalytic activity">
    <reaction evidence="2">
        <text>2-[(15S)-hydroxy-(5Z,8Z,11Z,13E)-eicosatetraenoyl]-sn-glycero-3-phosphocholine + H2O = (15S)-hydroxy-(5Z,8Z,11Z,13E)-eicosatetraenoate + sn-glycerol 3-phosphocholine + H(+)</text>
        <dbReference type="Rhea" id="RHEA:53700"/>
        <dbReference type="ChEBI" id="CHEBI:15377"/>
        <dbReference type="ChEBI" id="CHEBI:15378"/>
        <dbReference type="ChEBI" id="CHEBI:16870"/>
        <dbReference type="ChEBI" id="CHEBI:57409"/>
        <dbReference type="ChEBI" id="CHEBI:137584"/>
    </reaction>
    <physiologicalReaction direction="left-to-right" evidence="2">
        <dbReference type="Rhea" id="RHEA:53701"/>
    </physiologicalReaction>
</comment>
<comment type="catalytic activity">
    <reaction evidence="2">
        <text>2-[(15R)-hydroxy-(5Z,8Z,11Z,13E)-eicosatetraenoyl]-sn-glycero-3-phosphocholine + H2O = (15R)-hydroxy-(5Z,8Z,11Z,13E)-eicosatetraenoate + sn-glycerol 3-phosphocholine + H(+)</text>
        <dbReference type="Rhea" id="RHEA:53696"/>
        <dbReference type="ChEBI" id="CHEBI:15377"/>
        <dbReference type="ChEBI" id="CHEBI:15378"/>
        <dbReference type="ChEBI" id="CHEBI:16870"/>
        <dbReference type="ChEBI" id="CHEBI:78837"/>
        <dbReference type="ChEBI" id="CHEBI:137583"/>
    </reaction>
    <physiologicalReaction direction="left-to-right" evidence="2">
        <dbReference type="Rhea" id="RHEA:53697"/>
    </physiologicalReaction>
</comment>
<comment type="catalytic activity">
    <reaction evidence="2">
        <text>2-(prostaglandin E2)-sn-glycero-3-phosphocholine + H2O = prostaglandin E2 + sn-glycerol 3-phosphocholine + H(+)</text>
        <dbReference type="Rhea" id="RHEA:53692"/>
        <dbReference type="ChEBI" id="CHEBI:15377"/>
        <dbReference type="ChEBI" id="CHEBI:15378"/>
        <dbReference type="ChEBI" id="CHEBI:16870"/>
        <dbReference type="ChEBI" id="CHEBI:137585"/>
        <dbReference type="ChEBI" id="CHEBI:606564"/>
    </reaction>
    <physiologicalReaction direction="left-to-right" evidence="2">
        <dbReference type="Rhea" id="RHEA:53693"/>
    </physiologicalReaction>
</comment>
<comment type="catalytic activity">
    <reaction evidence="2">
        <text>2-[(11R)-hydroxy-(5Z,8Z,12E,14Z)-eicosatetraenoyl]-sn-glycero-3-phosphocholine + H2O = (11R)-hydroxy-(5Z,8Z,12E,14Z)-eicosatetraenoate + sn-glycerol 3-phosphocholine + H(+)</text>
        <dbReference type="Rhea" id="RHEA:53688"/>
        <dbReference type="ChEBI" id="CHEBI:15377"/>
        <dbReference type="ChEBI" id="CHEBI:15378"/>
        <dbReference type="ChEBI" id="CHEBI:16870"/>
        <dbReference type="ChEBI" id="CHEBI:78836"/>
        <dbReference type="ChEBI" id="CHEBI:137582"/>
    </reaction>
    <physiologicalReaction direction="left-to-right" evidence="2">
        <dbReference type="Rhea" id="RHEA:53689"/>
    </physiologicalReaction>
</comment>
<comment type="catalytic activity">
    <reaction evidence="2">
        <text>1-(5Z,8Z,11Z,14Z-eicosatetraenoyl)-2-O-hexadecyl-sn-glycero-3-phosphocholine + H2O = 2-O-hexadecyl-sn-glycero-3-phosphocholine + (5Z,8Z,11Z,14Z)-eicosatetraenoate + H(+)</text>
        <dbReference type="Rhea" id="RHEA:41271"/>
        <dbReference type="ChEBI" id="CHEBI:15377"/>
        <dbReference type="ChEBI" id="CHEBI:15378"/>
        <dbReference type="ChEBI" id="CHEBI:32395"/>
        <dbReference type="ChEBI" id="CHEBI:77695"/>
        <dbReference type="ChEBI" id="CHEBI:77696"/>
    </reaction>
    <physiologicalReaction direction="left-to-right" evidence="2">
        <dbReference type="Rhea" id="RHEA:41272"/>
    </physiologicalReaction>
</comment>
<comment type="catalytic activity">
    <reaction evidence="2">
        <text>1-octadecanoyl-2-(5Z,8Z,11Z,14Z-eicosatetraenoyl)-sn-glycero-3-phosphocholine + glycerol = 1-(5Z,8Z,11Z,14Z-eicosatetraenoyl)-glycerol + 1-octadecanoyl-sn-glycero-3-phosphocholine</text>
        <dbReference type="Rhea" id="RHEA:41099"/>
        <dbReference type="ChEBI" id="CHEBI:17754"/>
        <dbReference type="ChEBI" id="CHEBI:73858"/>
        <dbReference type="ChEBI" id="CHEBI:74965"/>
        <dbReference type="ChEBI" id="CHEBI:75612"/>
    </reaction>
    <physiologicalReaction direction="left-to-right" evidence="2">
        <dbReference type="Rhea" id="RHEA:41100"/>
    </physiologicalReaction>
</comment>
<comment type="catalytic activity">
    <reaction evidence="2">
        <text>1-octadecanoyl-2-(9Z,12Z,15Z-octadecatrienoyl)-sn-glycero-3-phosphocholine + glycerol = 1-(9Z,12Z,15Z-octadecatrienoyl)-glycerol + 1-octadecanoyl-sn-glycero-3-phosphocholine</text>
        <dbReference type="Rhea" id="RHEA:41087"/>
        <dbReference type="ChEBI" id="CHEBI:17754"/>
        <dbReference type="ChEBI" id="CHEBI:73858"/>
        <dbReference type="ChEBI" id="CHEBI:75610"/>
        <dbReference type="ChEBI" id="CHEBI:78022"/>
    </reaction>
    <physiologicalReaction direction="left-to-right" evidence="2">
        <dbReference type="Rhea" id="RHEA:41088"/>
    </physiologicalReaction>
</comment>
<comment type="activity regulation">
    <text evidence="7 10">Activated by cytosolic calcium, which is necessary for binding to membrane lipids (PubMed:1904318). Activated by phosphorylation in response to mitogenic stimuli (PubMed:10978317). Stimulated by agonists such as ATP and thrombin (PubMed:10978317).</text>
</comment>
<comment type="pathway">
    <text evidence="10">Membrane lipid metabolism; glycerophospholipid metabolism.</text>
</comment>
<comment type="pathway">
    <text evidence="11">Lipid metabolism; arachidonate metabolism.</text>
</comment>
<comment type="pathway">
    <text evidence="11">Lipid metabolism; prostaglandin biosynthesis.</text>
</comment>
<comment type="pathway">
    <text evidence="2">Lipid metabolism; leukotriene B4 biosynthesis.</text>
</comment>
<comment type="subunit">
    <text evidence="2">Interacts with KAT5.</text>
</comment>
<comment type="subcellular location">
    <subcellularLocation>
        <location evidence="2">Cytoplasm</location>
    </subcellularLocation>
    <subcellularLocation>
        <location evidence="2">Golgi apparatus membrane</location>
    </subcellularLocation>
    <subcellularLocation>
        <location evidence="2">Nucleus envelope</location>
    </subcellularLocation>
    <text evidence="2">Translocates to intracellular membranes in a calcium-dependent way.</text>
</comment>
<comment type="tissue specificity">
    <text evidence="12">Expressed in various organs including uterus, kidney, spleen, liver, heart, lung and brain (at protein level).</text>
</comment>
<comment type="domain">
    <text evidence="2">The N-terminal C2 domain associates with lipid membranes upon calcium binding. It modulates enzyme activity by presenting the active site to its substrate in response to elevations of cytosolic calcium. In the presence of phosphoinositides, regulates phospholipase A2 and lysophospholipase activities in a calcium-independent way.</text>
</comment>
<comment type="PTM">
    <text evidence="7">Phosphorylated at both Ser-505 and Ser-726 in response to mitogenic stimuli.</text>
</comment>
<comment type="disruption phenotype">
    <text evidence="8 9 11 12">Mutant female mice have reduced fertility and produce small litters that most commonly result in dead pups. The pregnancy failure is likely due to a deficient implantation and parturition (PubMed:9403692, PubMed:9403693). In an inflammatory setting, mutant mice are protected against various pathological changes (PubMed:11984592, PubMed:16172261, PubMed:9403692, PubMed:9403693). In a bleomycin-induced model of pulmonary fibrosis, mutant mice show an attenuated lung inflammation characterized by impaired induction of eicosanoid synthesis and impaired inflammatory leukocyte migration to the lung (PubMed:11984592). Mutant mice are resistant to experimental autoimmune encephalomyelitis due to impaired T helper 1 type immune response (PubMed:16172261). They are also partially protected against cerebral ischaemia and reperfusion (PubMed:9403693). In a systemic anaphylaxis model, mutant mice show reduced allergen-induced bronchial hyperactivity (PubMed:9403692).</text>
</comment>
<dbReference type="EC" id="3.1.1.4" evidence="10"/>
<dbReference type="EC" id="3.1.1.5" evidence="2"/>
<dbReference type="EMBL" id="M72394">
    <property type="protein sequence ID" value="AAB00796.1"/>
    <property type="molecule type" value="mRNA"/>
</dbReference>
<dbReference type="EMBL" id="BC003816">
    <property type="protein sequence ID" value="AAH03816.1"/>
    <property type="molecule type" value="mRNA"/>
</dbReference>
<dbReference type="CCDS" id="CCDS15352.1"/>
<dbReference type="PIR" id="B39898">
    <property type="entry name" value="B39898"/>
</dbReference>
<dbReference type="RefSeq" id="NP_032895.1">
    <property type="nucleotide sequence ID" value="NM_008869.4"/>
</dbReference>
<dbReference type="BMRB" id="P47713"/>
<dbReference type="SMR" id="P47713"/>
<dbReference type="BioGRID" id="202222">
    <property type="interactions" value="13"/>
</dbReference>
<dbReference type="CORUM" id="P47713"/>
<dbReference type="FunCoup" id="P47713">
    <property type="interactions" value="1523"/>
</dbReference>
<dbReference type="IntAct" id="P47713">
    <property type="interactions" value="13"/>
</dbReference>
<dbReference type="MINT" id="P47713"/>
<dbReference type="STRING" id="10090.ENSMUSP00000070868"/>
<dbReference type="BindingDB" id="P47713"/>
<dbReference type="ChEMBL" id="CHEMBL2907"/>
<dbReference type="GlyGen" id="P47713">
    <property type="glycosylation" value="1 site, 1 O-linked glycan (1 site)"/>
</dbReference>
<dbReference type="iPTMnet" id="P47713"/>
<dbReference type="PhosphoSitePlus" id="P47713"/>
<dbReference type="SwissPalm" id="P47713"/>
<dbReference type="jPOST" id="P47713"/>
<dbReference type="PaxDb" id="10090-ENSMUSP00000070868"/>
<dbReference type="PeptideAtlas" id="P47713"/>
<dbReference type="ProteomicsDB" id="294369"/>
<dbReference type="Pumba" id="P47713"/>
<dbReference type="Antibodypedia" id="4104">
    <property type="antibodies" value="411 antibodies from 38 providers"/>
</dbReference>
<dbReference type="DNASU" id="18783"/>
<dbReference type="Ensembl" id="ENSMUST00000070200.15">
    <property type="protein sequence ID" value="ENSMUSP00000070868.9"/>
    <property type="gene ID" value="ENSMUSG00000056220.15"/>
</dbReference>
<dbReference type="GeneID" id="18783"/>
<dbReference type="KEGG" id="mmu:18783"/>
<dbReference type="UCSC" id="uc007cxt.2">
    <property type="organism name" value="mouse"/>
</dbReference>
<dbReference type="AGR" id="MGI:1195256"/>
<dbReference type="CTD" id="5321"/>
<dbReference type="MGI" id="MGI:1195256">
    <property type="gene designation" value="Pla2g4a"/>
</dbReference>
<dbReference type="VEuPathDB" id="HostDB:ENSMUSG00000056220"/>
<dbReference type="eggNOG" id="KOG1012">
    <property type="taxonomic scope" value="Eukaryota"/>
</dbReference>
<dbReference type="eggNOG" id="KOG1325">
    <property type="taxonomic scope" value="Eukaryota"/>
</dbReference>
<dbReference type="GeneTree" id="ENSGT01030000234606"/>
<dbReference type="HOGENOM" id="CLU_011663_1_1_1"/>
<dbReference type="InParanoid" id="P47713"/>
<dbReference type="OMA" id="NQESWVQ"/>
<dbReference type="OrthoDB" id="419768at2759"/>
<dbReference type="PhylomeDB" id="P47713"/>
<dbReference type="TreeFam" id="TF325228"/>
<dbReference type="BRENDA" id="3.1.1.4">
    <property type="organism ID" value="3474"/>
</dbReference>
<dbReference type="Reactome" id="R-MMU-111995">
    <property type="pathway name" value="phospho-PLA2 pathway"/>
</dbReference>
<dbReference type="Reactome" id="R-MMU-1482788">
    <property type="pathway name" value="Acyl chain remodelling of PC"/>
</dbReference>
<dbReference type="Reactome" id="R-MMU-1482798">
    <property type="pathway name" value="Acyl chain remodeling of CL"/>
</dbReference>
<dbReference type="Reactome" id="R-MMU-1482801">
    <property type="pathway name" value="Acyl chain remodelling of PS"/>
</dbReference>
<dbReference type="Reactome" id="R-MMU-1482839">
    <property type="pathway name" value="Acyl chain remodelling of PE"/>
</dbReference>
<dbReference type="Reactome" id="R-MMU-1482922">
    <property type="pathway name" value="Acyl chain remodelling of PI"/>
</dbReference>
<dbReference type="Reactome" id="R-MMU-1482925">
    <property type="pathway name" value="Acyl chain remodelling of PG"/>
</dbReference>
<dbReference type="Reactome" id="R-MMU-1483115">
    <property type="pathway name" value="Hydrolysis of LPC"/>
</dbReference>
<dbReference type="Reactome" id="R-MMU-1483166">
    <property type="pathway name" value="Synthesis of PA"/>
</dbReference>
<dbReference type="Reactome" id="R-MMU-2142753">
    <property type="pathway name" value="Arachidonate metabolism"/>
</dbReference>
<dbReference type="Reactome" id="R-MMU-418592">
    <property type="pathway name" value="ADP signalling through P2Y purinoceptor 1"/>
</dbReference>
<dbReference type="Reactome" id="R-MMU-432142">
    <property type="pathway name" value="Platelet sensitization by LDL"/>
</dbReference>
<dbReference type="Reactome" id="R-MMU-6811436">
    <property type="pathway name" value="COPI-independent Golgi-to-ER retrograde traffic"/>
</dbReference>
<dbReference type="SABIO-RK" id="P47713"/>
<dbReference type="UniPathway" id="UPA00383"/>
<dbReference type="UniPathway" id="UPA00662"/>
<dbReference type="UniPathway" id="UPA00878"/>
<dbReference type="UniPathway" id="UPA00940"/>
<dbReference type="BioGRID-ORCS" id="18783">
    <property type="hits" value="2 hits in 62 CRISPR screens"/>
</dbReference>
<dbReference type="PRO" id="PR:P47713"/>
<dbReference type="Proteomes" id="UP000000589">
    <property type="component" value="Chromosome 1"/>
</dbReference>
<dbReference type="RNAct" id="P47713">
    <property type="molecule type" value="protein"/>
</dbReference>
<dbReference type="Bgee" id="ENSMUSG00000056220">
    <property type="expression patterns" value="Expressed in indifferent gonad and 244 other cell types or tissues"/>
</dbReference>
<dbReference type="ExpressionAtlas" id="P47713">
    <property type="expression patterns" value="baseline and differential"/>
</dbReference>
<dbReference type="GO" id="GO:0005829">
    <property type="term" value="C:cytosol"/>
    <property type="evidence" value="ECO:0000314"/>
    <property type="project" value="UniProtKB"/>
</dbReference>
<dbReference type="GO" id="GO:0005783">
    <property type="term" value="C:endoplasmic reticulum"/>
    <property type="evidence" value="ECO:0000314"/>
    <property type="project" value="MGI"/>
</dbReference>
<dbReference type="GO" id="GO:0005794">
    <property type="term" value="C:Golgi apparatus"/>
    <property type="evidence" value="ECO:0000314"/>
    <property type="project" value="MGI"/>
</dbReference>
<dbReference type="GO" id="GO:0000139">
    <property type="term" value="C:Golgi membrane"/>
    <property type="evidence" value="ECO:0000250"/>
    <property type="project" value="UniProtKB"/>
</dbReference>
<dbReference type="GO" id="GO:0005635">
    <property type="term" value="C:nuclear envelope"/>
    <property type="evidence" value="ECO:0000250"/>
    <property type="project" value="UniProtKB"/>
</dbReference>
<dbReference type="GO" id="GO:0005509">
    <property type="term" value="F:calcium ion binding"/>
    <property type="evidence" value="ECO:0000250"/>
    <property type="project" value="UniProtKB"/>
</dbReference>
<dbReference type="GO" id="GO:0047498">
    <property type="term" value="F:calcium-dependent phospholipase A2 activity"/>
    <property type="evidence" value="ECO:0000315"/>
    <property type="project" value="UniProtKB"/>
</dbReference>
<dbReference type="GO" id="GO:0005544">
    <property type="term" value="F:calcium-dependent phospholipid binding"/>
    <property type="evidence" value="ECO:0000250"/>
    <property type="project" value="UniProtKB"/>
</dbReference>
<dbReference type="GO" id="GO:0047499">
    <property type="term" value="F:calcium-independent phospholipase A2 activity"/>
    <property type="evidence" value="ECO:0007669"/>
    <property type="project" value="Ensembl"/>
</dbReference>
<dbReference type="GO" id="GO:1902387">
    <property type="term" value="F:ceramide 1-phosphate binding"/>
    <property type="evidence" value="ECO:0000250"/>
    <property type="project" value="UniProtKB"/>
</dbReference>
<dbReference type="GO" id="GO:0004622">
    <property type="term" value="F:lysophospholipase activity"/>
    <property type="evidence" value="ECO:0000250"/>
    <property type="project" value="UniProtKB"/>
</dbReference>
<dbReference type="GO" id="GO:0008374">
    <property type="term" value="F:O-acyltransferase activity"/>
    <property type="evidence" value="ECO:0000250"/>
    <property type="project" value="UniProtKB"/>
</dbReference>
<dbReference type="GO" id="GO:0032266">
    <property type="term" value="F:phosphatidylinositol-3-phosphate binding"/>
    <property type="evidence" value="ECO:0000250"/>
    <property type="project" value="UniProtKB"/>
</dbReference>
<dbReference type="GO" id="GO:0070273">
    <property type="term" value="F:phosphatidylinositol-4-phosphate binding"/>
    <property type="evidence" value="ECO:0000250"/>
    <property type="project" value="UniProtKB"/>
</dbReference>
<dbReference type="GO" id="GO:0010314">
    <property type="term" value="F:phosphatidylinositol-5-phosphate binding"/>
    <property type="evidence" value="ECO:0000250"/>
    <property type="project" value="UniProtKB"/>
</dbReference>
<dbReference type="GO" id="GO:0004623">
    <property type="term" value="F:phospholipase A2 activity"/>
    <property type="evidence" value="ECO:0000314"/>
    <property type="project" value="UniProtKB"/>
</dbReference>
<dbReference type="GO" id="GO:0019369">
    <property type="term" value="P:arachidonate metabolic process"/>
    <property type="evidence" value="ECO:0000250"/>
    <property type="project" value="UniProtKB"/>
</dbReference>
<dbReference type="GO" id="GO:0050482">
    <property type="term" value="P:arachidonate secretion"/>
    <property type="evidence" value="ECO:0000314"/>
    <property type="project" value="UniProtKB"/>
</dbReference>
<dbReference type="GO" id="GO:0071236">
    <property type="term" value="P:cellular response to antibiotic"/>
    <property type="evidence" value="ECO:0000314"/>
    <property type="project" value="MGI"/>
</dbReference>
<dbReference type="GO" id="GO:0051649">
    <property type="term" value="P:establishment of localization in cell"/>
    <property type="evidence" value="ECO:0000315"/>
    <property type="project" value="MGI"/>
</dbReference>
<dbReference type="GO" id="GO:0006071">
    <property type="term" value="P:glycerol metabolic process"/>
    <property type="evidence" value="ECO:0007669"/>
    <property type="project" value="UniProtKB-KW"/>
</dbReference>
<dbReference type="GO" id="GO:0046456">
    <property type="term" value="P:icosanoid biosynthetic process"/>
    <property type="evidence" value="ECO:0000315"/>
    <property type="project" value="MGI"/>
</dbReference>
<dbReference type="GO" id="GO:0019370">
    <property type="term" value="P:leukotriene biosynthetic process"/>
    <property type="evidence" value="ECO:0000315"/>
    <property type="project" value="UniProtKB"/>
</dbReference>
<dbReference type="GO" id="GO:0006640">
    <property type="term" value="P:monoacylglycerol biosynthetic process"/>
    <property type="evidence" value="ECO:0000250"/>
    <property type="project" value="UniProtKB"/>
</dbReference>
<dbReference type="GO" id="GO:0036151">
    <property type="term" value="P:phosphatidylcholine acyl-chain remodeling"/>
    <property type="evidence" value="ECO:0007669"/>
    <property type="project" value="Ensembl"/>
</dbReference>
<dbReference type="GO" id="GO:0034638">
    <property type="term" value="P:phosphatidylcholine catabolic process"/>
    <property type="evidence" value="ECO:0000315"/>
    <property type="project" value="UniProtKB"/>
</dbReference>
<dbReference type="GO" id="GO:0034478">
    <property type="term" value="P:phosphatidylglycerol catabolic process"/>
    <property type="evidence" value="ECO:0000250"/>
    <property type="project" value="UniProtKB"/>
</dbReference>
<dbReference type="GO" id="GO:0006663">
    <property type="term" value="P:platelet activating factor biosynthetic process"/>
    <property type="evidence" value="ECO:0000315"/>
    <property type="project" value="UniProtKB"/>
</dbReference>
<dbReference type="GO" id="GO:0043032">
    <property type="term" value="P:positive regulation of macrophage activation"/>
    <property type="evidence" value="ECO:0000315"/>
    <property type="project" value="UniProtKB"/>
</dbReference>
<dbReference type="GO" id="GO:0010572">
    <property type="term" value="P:positive regulation of platelet activation"/>
    <property type="evidence" value="ECO:0007669"/>
    <property type="project" value="Ensembl"/>
</dbReference>
<dbReference type="GO" id="GO:0032308">
    <property type="term" value="P:positive regulation of prostaglandin secretion"/>
    <property type="evidence" value="ECO:0000315"/>
    <property type="project" value="MGI"/>
</dbReference>
<dbReference type="GO" id="GO:0002827">
    <property type="term" value="P:positive regulation of T-helper 1 type immune response"/>
    <property type="evidence" value="ECO:0000315"/>
    <property type="project" value="UniProtKB"/>
</dbReference>
<dbReference type="GO" id="GO:0001516">
    <property type="term" value="P:prostaglandin biosynthetic process"/>
    <property type="evidence" value="ECO:0000315"/>
    <property type="project" value="UniProtKB"/>
</dbReference>
<dbReference type="GO" id="GO:0042127">
    <property type="term" value="P:regulation of cell population proliferation"/>
    <property type="evidence" value="ECO:0000316"/>
    <property type="project" value="MGI"/>
</dbReference>
<dbReference type="CDD" id="cd04036">
    <property type="entry name" value="C2_cPLA2"/>
    <property type="match status" value="1"/>
</dbReference>
<dbReference type="CDD" id="cd07200">
    <property type="entry name" value="cPLA2_Grp-IVA"/>
    <property type="match status" value="1"/>
</dbReference>
<dbReference type="FunFam" id="2.60.40.150:FF:000030">
    <property type="entry name" value="Phospholipase A2"/>
    <property type="match status" value="1"/>
</dbReference>
<dbReference type="Gene3D" id="2.60.40.150">
    <property type="entry name" value="C2 domain"/>
    <property type="match status" value="1"/>
</dbReference>
<dbReference type="Gene3D" id="3.40.1090.10">
    <property type="entry name" value="Cytosolic phospholipase A2 catalytic domain"/>
    <property type="match status" value="1"/>
</dbReference>
<dbReference type="InterPro" id="IPR016035">
    <property type="entry name" value="Acyl_Trfase/lysoPLipase"/>
</dbReference>
<dbReference type="InterPro" id="IPR041847">
    <property type="entry name" value="C2_cPLA2"/>
</dbReference>
<dbReference type="InterPro" id="IPR000008">
    <property type="entry name" value="C2_dom"/>
</dbReference>
<dbReference type="InterPro" id="IPR035892">
    <property type="entry name" value="C2_domain_sf"/>
</dbReference>
<dbReference type="InterPro" id="IPR002642">
    <property type="entry name" value="LysoPLipase_cat_dom"/>
</dbReference>
<dbReference type="PANTHER" id="PTHR10728">
    <property type="entry name" value="CYTOSOLIC PHOSPHOLIPASE A2"/>
    <property type="match status" value="1"/>
</dbReference>
<dbReference type="PANTHER" id="PTHR10728:SF13">
    <property type="entry name" value="CYTOSOLIC PHOSPHOLIPASE A2"/>
    <property type="match status" value="1"/>
</dbReference>
<dbReference type="Pfam" id="PF00168">
    <property type="entry name" value="C2"/>
    <property type="match status" value="1"/>
</dbReference>
<dbReference type="Pfam" id="PF01735">
    <property type="entry name" value="PLA2_B"/>
    <property type="match status" value="1"/>
</dbReference>
<dbReference type="SMART" id="SM00239">
    <property type="entry name" value="C2"/>
    <property type="match status" value="1"/>
</dbReference>
<dbReference type="SMART" id="SM00022">
    <property type="entry name" value="PLAc"/>
    <property type="match status" value="1"/>
</dbReference>
<dbReference type="SUPFAM" id="SSF49562">
    <property type="entry name" value="C2 domain (Calcium/lipid-binding domain, CaLB)"/>
    <property type="match status" value="1"/>
</dbReference>
<dbReference type="SUPFAM" id="SSF52151">
    <property type="entry name" value="FabD/lysophospholipase-like"/>
    <property type="match status" value="1"/>
</dbReference>
<dbReference type="PROSITE" id="PS50004">
    <property type="entry name" value="C2"/>
    <property type="match status" value="1"/>
</dbReference>
<dbReference type="PROSITE" id="PS51210">
    <property type="entry name" value="PLA2C"/>
    <property type="match status" value="1"/>
</dbReference>
<accession>P47713</accession>
<organism>
    <name type="scientific">Mus musculus</name>
    <name type="common">Mouse</name>
    <dbReference type="NCBI Taxonomy" id="10090"/>
    <lineage>
        <taxon>Eukaryota</taxon>
        <taxon>Metazoa</taxon>
        <taxon>Chordata</taxon>
        <taxon>Craniata</taxon>
        <taxon>Vertebrata</taxon>
        <taxon>Euteleostomi</taxon>
        <taxon>Mammalia</taxon>
        <taxon>Eutheria</taxon>
        <taxon>Euarchontoglires</taxon>
        <taxon>Glires</taxon>
        <taxon>Rodentia</taxon>
        <taxon>Myomorpha</taxon>
        <taxon>Muroidea</taxon>
        <taxon>Muridae</taxon>
        <taxon>Murinae</taxon>
        <taxon>Mus</taxon>
        <taxon>Mus</taxon>
    </lineage>
</organism>
<sequence>MSFIDPYQHIIVEHQYSHKFTVVVLRATKVTKGTFGDMLDTPDPYVELFISTTPDSRKRTRHFNNDINPVWNETFEFILDPNQENVLEITLMDANYVMDETLGTATFPVSSMKVGEKKEVPFIFNQVTEMILEMSLEVCSCPDLRFSMALCDQEKTFRQQRKENIKENMKKLLGPKKSEGLYSTRDVPVVAILGSGGGFRAMVGFSGVMKALYESGILDCATYIAGLSGSTWYMSTLYSHPDFPEKGPEEINEELMKNVSHNPLLLLTPQKVKRYVESLWKKKSSGQPVTFTDIFGMLIGETLIQNRMSMTLSSLKEKVNAARCPLPLFTCLHVKPDVSELMFADWVEFSPYEIGMAKYGTFMAPDLFGSKFFMGTVVKKYEENPLHFLMGVWGSAFSILFNRVLGVSGSQNKGSTMEEELENITAKHIVSNDSSDSDDEAQGPKGTENEEAEKEYQSDNQASWVHRMLMALVSDSALFNTREGRAGKVHNFMLGLNLNTSYPLSPLRDFSSQDSFDDELDAAVADPDEFERIYEPLDVKSKKIHVVDSGLTFNLPYPLILRPQRGVDLIISFDFSARPSDTSPPFKELLLAEKWAKMNKLPFPKIDPYVFDREGLKECYVFKPKNPDVEKDCPTIIHFVLANINFRKYKAPGVLRETKEEKEIADFDIFDDPESPFSTFNFQYPNQAFKRLHDLMYFNTLNNIDVIKDAIVESIEYRRQNPSRCSVSLSNVEARKFFNKEFLSKPTV</sequence>
<feature type="chain" id="PRO_0000187263" description="Cytosolic phospholipase A2">
    <location>
        <begin position="1"/>
        <end position="748"/>
    </location>
</feature>
<feature type="domain" description="C2" evidence="4">
    <location>
        <begin position="6"/>
        <end position="122"/>
    </location>
</feature>
<feature type="domain" description="PLA2c" evidence="5">
    <location>
        <begin position="140"/>
        <end position="739"/>
    </location>
</feature>
<feature type="region of interest" description="Phospholipid binding" evidence="13">
    <location>
        <begin position="1"/>
        <end position="178"/>
    </location>
</feature>
<feature type="region of interest" description="Disordered" evidence="6">
    <location>
        <begin position="427"/>
        <end position="458"/>
    </location>
</feature>
<feature type="active site" description="Nucleophile" evidence="1">
    <location>
        <position position="228"/>
    </location>
</feature>
<feature type="active site" description="Proton acceptor" evidence="1">
    <location>
        <position position="548"/>
    </location>
</feature>
<feature type="binding site" evidence="1">
    <location>
        <position position="40"/>
    </location>
    <ligand>
        <name>Ca(2+)</name>
        <dbReference type="ChEBI" id="CHEBI:29108"/>
        <label>1</label>
    </ligand>
</feature>
<feature type="binding site" evidence="1">
    <location>
        <position position="40"/>
    </location>
    <ligand>
        <name>Ca(2+)</name>
        <dbReference type="ChEBI" id="CHEBI:29108"/>
        <label>2</label>
    </ligand>
</feature>
<feature type="binding site" evidence="1">
    <location>
        <position position="41"/>
    </location>
    <ligand>
        <name>Ca(2+)</name>
        <dbReference type="ChEBI" id="CHEBI:29108"/>
        <label>1</label>
    </ligand>
</feature>
<feature type="binding site" evidence="1">
    <location>
        <position position="43"/>
    </location>
    <ligand>
        <name>Ca(2+)</name>
        <dbReference type="ChEBI" id="CHEBI:29108"/>
        <label>1</label>
    </ligand>
</feature>
<feature type="binding site" evidence="1">
    <location>
        <position position="43"/>
    </location>
    <ligand>
        <name>Ca(2+)</name>
        <dbReference type="ChEBI" id="CHEBI:29108"/>
        <label>2</label>
    </ligand>
</feature>
<feature type="binding site" evidence="1">
    <location>
        <position position="65"/>
    </location>
    <ligand>
        <name>Ca(2+)</name>
        <dbReference type="ChEBI" id="CHEBI:29108"/>
        <label>1</label>
    </ligand>
</feature>
<feature type="binding site" evidence="1">
    <location>
        <position position="93"/>
    </location>
    <ligand>
        <name>Ca(2+)</name>
        <dbReference type="ChEBI" id="CHEBI:29108"/>
        <label>2</label>
    </ligand>
</feature>
<feature type="binding site" evidence="1">
    <location>
        <position position="94"/>
    </location>
    <ligand>
        <name>Ca(2+)</name>
        <dbReference type="ChEBI" id="CHEBI:29108"/>
        <label>2</label>
    </ligand>
</feature>
<feature type="binding site" evidence="1">
    <location>
        <position position="95"/>
    </location>
    <ligand>
        <name>Ca(2+)</name>
        <dbReference type="ChEBI" id="CHEBI:29108"/>
        <label>2</label>
    </ligand>
</feature>
<feature type="modified residue" description="Phosphoserine" evidence="2">
    <location>
        <position position="2"/>
    </location>
</feature>
<feature type="modified residue" description="Phosphothreonine" evidence="2">
    <location>
        <position position="268"/>
    </location>
</feature>
<feature type="modified residue" description="Phosphoserine" evidence="3">
    <location>
        <position position="434"/>
    </location>
</feature>
<feature type="modified residue" description="Phosphoserine" evidence="17">
    <location>
        <position position="435"/>
    </location>
</feature>
<feature type="modified residue" description="Phosphoserine" evidence="16 17">
    <location>
        <position position="437"/>
    </location>
</feature>
<feature type="modified residue" description="Phosphoserine; by MAPK" evidence="7 17">
    <location>
        <position position="505"/>
    </location>
</feature>
<feature type="modified residue" description="Phosphoserine" evidence="3">
    <location>
        <position position="515"/>
    </location>
</feature>
<feature type="modified residue" description="Phosphoserine" evidence="7 17">
    <location>
        <position position="726"/>
    </location>
</feature>
<feature type="modified residue" description="Phosphoserine" evidence="17">
    <location>
        <position position="728"/>
    </location>
</feature>
<feature type="cross-link" description="Glycyl lysine isopeptide (Lys-Gly) (interchain with G-Cter in SUMO2)" evidence="2">
    <location>
        <position position="540"/>
    </location>
</feature>
<feature type="cross-link" description="Glycyl lysine isopeptide (Lys-Gly) (interchain with G-Cter in SUMO2)" evidence="2">
    <location>
        <position position="605"/>
    </location>
</feature>
<proteinExistence type="evidence at protein level"/>
<evidence type="ECO:0000250" key="1"/>
<evidence type="ECO:0000250" key="2">
    <source>
        <dbReference type="UniProtKB" id="P47712"/>
    </source>
</evidence>
<evidence type="ECO:0000250" key="3">
    <source>
        <dbReference type="UniProtKB" id="P50393"/>
    </source>
</evidence>
<evidence type="ECO:0000255" key="4">
    <source>
        <dbReference type="PROSITE-ProRule" id="PRU00041"/>
    </source>
</evidence>
<evidence type="ECO:0000255" key="5">
    <source>
        <dbReference type="PROSITE-ProRule" id="PRU00555"/>
    </source>
</evidence>
<evidence type="ECO:0000256" key="6">
    <source>
        <dbReference type="SAM" id="MobiDB-lite"/>
    </source>
</evidence>
<evidence type="ECO:0000269" key="7">
    <source>
    </source>
</evidence>
<evidence type="ECO:0000269" key="8">
    <source>
    </source>
</evidence>
<evidence type="ECO:0000269" key="9">
    <source>
    </source>
</evidence>
<evidence type="ECO:0000269" key="10">
    <source>
    </source>
</evidence>
<evidence type="ECO:0000269" key="11">
    <source>
    </source>
</evidence>
<evidence type="ECO:0000269" key="12">
    <source>
    </source>
</evidence>
<evidence type="ECO:0000305" key="13"/>
<evidence type="ECO:0000305" key="14">
    <source>
    </source>
</evidence>
<evidence type="ECO:0000305" key="15">
    <source>
    </source>
</evidence>
<evidence type="ECO:0007744" key="16">
    <source>
    </source>
</evidence>
<evidence type="ECO:0007744" key="17">
    <source>
    </source>
</evidence>
<gene>
    <name type="primary">Pla2g4a</name>
    <name type="synonym">Cpla2</name>
    <name type="synonym">Pla2g4</name>
</gene>
<reference key="1">
    <citation type="journal article" date="1991" name="Cell">
        <title>A novel arachidonic acid-selective cytosolic PLA2 contains a Ca(2+)-dependent translocation domain with homology to PKC and GAP.</title>
        <authorList>
            <person name="Clark J.D."/>
            <person name="Lin L.-L."/>
            <person name="Kriz R.W."/>
            <person name="Ramesha C.S."/>
            <person name="Sultzman L.A."/>
            <person name="Lin A.Y."/>
            <person name="Milona N."/>
            <person name="Knopf J.L."/>
        </authorList>
    </citation>
    <scope>NUCLEOTIDE SEQUENCE [MRNA]</scope>
    <scope>FUNCTION</scope>
    <scope>CATALYTIC ACTIVITY</scope>
    <scope>PATHWAY</scope>
    <scope>ACTIVITY REGULATION</scope>
</reference>
<reference key="2">
    <citation type="journal article" date="2004" name="Genome Res.">
        <title>The status, quality, and expansion of the NIH full-length cDNA project: the Mammalian Gene Collection (MGC).</title>
        <authorList>
            <consortium name="The MGC Project Team"/>
        </authorList>
    </citation>
    <scope>NUCLEOTIDE SEQUENCE [LARGE SCALE MRNA]</scope>
    <source>
        <tissue>Mammary tumor</tissue>
    </source>
</reference>
<reference key="3">
    <citation type="journal article" date="1997" name="Nature">
        <title>Role of cytosolic phospholipase A2 in allergic response and parturition.</title>
        <authorList>
            <person name="Uozumi N."/>
            <person name="Kume K."/>
            <person name="Nagase T."/>
            <person name="Nakatani N."/>
            <person name="Ishii S."/>
            <person name="Tashiro F."/>
            <person name="Komagata Y."/>
            <person name="Maki K."/>
            <person name="Ikuta K."/>
            <person name="Ouchi Y."/>
            <person name="Miyazaki J."/>
            <person name="Shimizu T."/>
        </authorList>
    </citation>
    <scope>DISRUPTION PHENOTYPE</scope>
    <scope>FUNCTION</scope>
    <scope>PATHWAY</scope>
</reference>
<reference key="4">
    <citation type="journal article" date="1997" name="Nature">
        <title>Reduced fertility and postischaemic brain injury in mice deficient in cytosolic phospholipase A2.</title>
        <authorList>
            <person name="Bonventre J.V."/>
            <person name="Huang Z."/>
            <person name="Taheri M.R."/>
            <person name="O'Leary E."/>
            <person name="Li E."/>
            <person name="Moskowitz M.A."/>
            <person name="Sapirstein A."/>
        </authorList>
    </citation>
    <scope>DISRUPTION PHENOTYPE</scope>
    <scope>FUNCTION</scope>
    <scope>CATALYTIC ACTIVITY</scope>
    <scope>TISSUE SPECIFICITY</scope>
</reference>
<reference key="5">
    <citation type="journal article" date="2000" name="J. Biol. Chem.">
        <title>Serine 727 phosphorylation and activation of cytosolic phospholipase A2 by MNK1-related protein kinases.</title>
        <authorList>
            <person name="Hefner Y."/>
            <person name="Boersch-Haubold A.G."/>
            <person name="Murakami M."/>
            <person name="Wilde J.I."/>
            <person name="Pasquet S."/>
            <person name="Schieltz D."/>
            <person name="Ghomashchi F."/>
            <person name="Yates J.R. III"/>
            <person name="Armstrong C.G."/>
            <person name="Paterson A."/>
            <person name="Cohen P."/>
            <person name="Fukunaga R."/>
            <person name="Hunter T."/>
            <person name="Kudo I."/>
            <person name="Watson S.P."/>
            <person name="Gelb M.H."/>
        </authorList>
    </citation>
    <scope>PHOSPHORYLATION AT SER-505 AND SER-726</scope>
    <scope>ACTIVITY REGULATION</scope>
</reference>
<reference key="6">
    <citation type="journal article" date="2002" name="Nat. Med.">
        <title>A pivotal role of cytosolic phospholipase A(2) in bleomycin-induced pulmonary fibrosis.</title>
        <authorList>
            <person name="Nagase T."/>
            <person name="Uozumi N."/>
            <person name="Ishii S."/>
            <person name="Kita Y."/>
            <person name="Yamamoto H."/>
            <person name="Ohga E."/>
            <person name="Ouchi Y."/>
            <person name="Shimizu T."/>
        </authorList>
    </citation>
    <scope>DISRUPTION PHENOTYPE</scope>
</reference>
<reference key="7">
    <citation type="journal article" date="2005" name="J. Exp. Med.">
        <title>Cytosolic phospholipase A2 alpha-deficient mice are resistant to experimental autoimmune encephalomyelitis.</title>
        <authorList>
            <person name="Marusic S."/>
            <person name="Leach M.W."/>
            <person name="Pelker J.W."/>
            <person name="Azoitei M.L."/>
            <person name="Uozumi N."/>
            <person name="Cui J."/>
            <person name="Shen M.W."/>
            <person name="DeClercq C.M."/>
            <person name="Miyashiro J.S."/>
            <person name="Carito B.A."/>
            <person name="Thakker P."/>
            <person name="Simmons D.L."/>
            <person name="Leonard J.P."/>
            <person name="Shimizu T."/>
            <person name="Clark J.D."/>
        </authorList>
    </citation>
    <scope>DISRUPTION PHENOTYPE</scope>
</reference>
<reference key="8">
    <citation type="journal article" date="2007" name="Proc. Natl. Acad. Sci. U.S.A.">
        <title>Large-scale phosphorylation analysis of mouse liver.</title>
        <authorList>
            <person name="Villen J."/>
            <person name="Beausoleil S.A."/>
            <person name="Gerber S.A."/>
            <person name="Gygi S.P."/>
        </authorList>
    </citation>
    <scope>IDENTIFICATION BY MASS SPECTROMETRY [LARGE SCALE ANALYSIS]</scope>
    <source>
        <tissue>Liver</tissue>
    </source>
</reference>
<reference key="9">
    <citation type="journal article" date="2009" name="Immunity">
        <title>The phagosomal proteome in interferon-gamma-activated macrophages.</title>
        <authorList>
            <person name="Trost M."/>
            <person name="English L."/>
            <person name="Lemieux S."/>
            <person name="Courcelles M."/>
            <person name="Desjardins M."/>
            <person name="Thibault P."/>
        </authorList>
    </citation>
    <scope>PHOSPHORYLATION [LARGE SCALE ANALYSIS] AT SER-437</scope>
    <scope>IDENTIFICATION BY MASS SPECTROMETRY [LARGE SCALE ANALYSIS]</scope>
</reference>
<reference key="10">
    <citation type="journal article" date="2010" name="Cell">
        <title>A tissue-specific atlas of mouse protein phosphorylation and expression.</title>
        <authorList>
            <person name="Huttlin E.L."/>
            <person name="Jedrychowski M.P."/>
            <person name="Elias J.E."/>
            <person name="Goswami T."/>
            <person name="Rad R."/>
            <person name="Beausoleil S.A."/>
            <person name="Villen J."/>
            <person name="Haas W."/>
            <person name="Sowa M.E."/>
            <person name="Gygi S.P."/>
        </authorList>
    </citation>
    <scope>PHOSPHORYLATION [LARGE SCALE ANALYSIS] AT SER-435; SER-437; SER-505; SER-726 AND SER-728</scope>
    <scope>IDENTIFICATION BY MASS SPECTROMETRY [LARGE SCALE ANALYSIS]</scope>
    <source>
        <tissue>Heart</tissue>
        <tissue>Kidney</tissue>
        <tissue>Lung</tissue>
        <tissue>Spleen</tissue>
        <tissue>Testis</tissue>
    </source>
</reference>
<name>PA24A_MOUSE</name>
<keyword id="KW-0106">Calcium</keyword>
<keyword id="KW-0963">Cytoplasm</keyword>
<keyword id="KW-0275">Fatty acid biosynthesis</keyword>
<keyword id="KW-0276">Fatty acid metabolism</keyword>
<keyword id="KW-0319">Glycerol metabolism</keyword>
<keyword id="KW-0333">Golgi apparatus</keyword>
<keyword id="KW-0378">Hydrolase</keyword>
<keyword id="KW-1017">Isopeptide bond</keyword>
<keyword id="KW-0434">Leukotriene biosynthesis</keyword>
<keyword id="KW-0444">Lipid biosynthesis</keyword>
<keyword id="KW-0442">Lipid degradation</keyword>
<keyword id="KW-0443">Lipid metabolism</keyword>
<keyword id="KW-0446">Lipid-binding</keyword>
<keyword id="KW-0472">Membrane</keyword>
<keyword id="KW-0479">Metal-binding</keyword>
<keyword id="KW-0539">Nucleus</keyword>
<keyword id="KW-0595">Phospholipid degradation</keyword>
<keyword id="KW-1208">Phospholipid metabolism</keyword>
<keyword id="KW-0597">Phosphoprotein</keyword>
<keyword id="KW-0643">Prostaglandin biosynthesis</keyword>
<keyword id="KW-0644">Prostaglandin metabolism</keyword>
<keyword id="KW-1185">Reference proteome</keyword>
<keyword id="KW-0832">Ubl conjugation</keyword>